<organism>
    <name type="scientific">Chlamydia caviae (strain ATCC VR-813 / DSM 19441 / 03DC25 / GPIC)</name>
    <name type="common">Chlamydophila caviae</name>
    <dbReference type="NCBI Taxonomy" id="227941"/>
    <lineage>
        <taxon>Bacteria</taxon>
        <taxon>Pseudomonadati</taxon>
        <taxon>Chlamydiota</taxon>
        <taxon>Chlamydiia</taxon>
        <taxon>Chlamydiales</taxon>
        <taxon>Chlamydiaceae</taxon>
        <taxon>Chlamydia/Chlamydophila group</taxon>
        <taxon>Chlamydia</taxon>
    </lineage>
</organism>
<protein>
    <recommendedName>
        <fullName evidence="1">Cysteine--tRNA ligase</fullName>
        <ecNumber evidence="1">6.1.1.16</ecNumber>
    </recommendedName>
    <alternativeName>
        <fullName evidence="1">Cysteinyl-tRNA synthetase</fullName>
        <shortName evidence="1">CysRS</shortName>
    </alternativeName>
</protein>
<gene>
    <name evidence="1" type="primary">cysS</name>
    <name type="ordered locus">CCA_00838</name>
</gene>
<sequence>MRQSSESKQKLYLYNTVSRAKELFCSSNDPVKLYTCGPTVYDYAHIGNFRTYVFEDLLKRTLLFFGYSVRHIMNITDVDDKTLAGACKKNISLDAYTAPYIQAFFEDVASLNILPADVYPHATHYIPQMIEAIAKLLDEGIAYVGQDSSVYFSIEKFPTYGKLSQLKLQDLQCCSRVSSDEYDKENLSDFVLWKAYEEKRDGHIYWESPFGKGRPGWHLECSIMAMELLGASIDIHAGGVDNIFPHHENEIAQSESLSHQPFSRYWLHSEHLLVDGKKMSKSLGNFFTLRNLLDRGFSGEEIRYMLLQSHYRMQLNFTEEGLLACRQALKRLRDFISRIESVYPESSHISEDMQQHGEGFLQAFSEAIANDLNIAAALAALFDFIHQTNSTIDQANFTQADANYVLDIMKRINTVLGVIPFSADLEIPDHVKQLVEEREVARSEKNWKQADALRDQVASLGYSIEDAKSGPKVKKL</sequence>
<reference key="1">
    <citation type="journal article" date="2003" name="Nucleic Acids Res.">
        <title>Genome sequence of Chlamydophila caviae (Chlamydia psittaci GPIC): examining the role of niche-specific genes in the evolution of the Chlamydiaceae.</title>
        <authorList>
            <person name="Read T.D."/>
            <person name="Myers G.S.A."/>
            <person name="Brunham R.C."/>
            <person name="Nelson W.C."/>
            <person name="Paulsen I.T."/>
            <person name="Heidelberg J.F."/>
            <person name="Holtzapple E.K."/>
            <person name="Khouri H.M."/>
            <person name="Federova N.B."/>
            <person name="Carty H.A."/>
            <person name="Umayam L.A."/>
            <person name="Haft D.H."/>
            <person name="Peterson J.D."/>
            <person name="Beanan M.J."/>
            <person name="White O."/>
            <person name="Salzberg S.L."/>
            <person name="Hsia R.-C."/>
            <person name="McClarty G."/>
            <person name="Rank R.G."/>
            <person name="Bavoil P.M."/>
            <person name="Fraser C.M."/>
        </authorList>
    </citation>
    <scope>NUCLEOTIDE SEQUENCE [LARGE SCALE GENOMIC DNA]</scope>
    <source>
        <strain>ATCC VR-813 / DSM 19441 / 03DC25 / GPIC</strain>
    </source>
</reference>
<name>SYC_CHLCV</name>
<feature type="chain" id="PRO_0000159375" description="Cysteine--tRNA ligase">
    <location>
        <begin position="1"/>
        <end position="476"/>
    </location>
</feature>
<feature type="short sequence motif" description="'HIGH' region">
    <location>
        <begin position="38"/>
        <end position="48"/>
    </location>
</feature>
<feature type="short sequence motif" description="'KMSKS' region">
    <location>
        <begin position="278"/>
        <end position="282"/>
    </location>
</feature>
<feature type="binding site" evidence="1">
    <location>
        <position position="36"/>
    </location>
    <ligand>
        <name>Zn(2+)</name>
        <dbReference type="ChEBI" id="CHEBI:29105"/>
    </ligand>
</feature>
<feature type="binding site" evidence="1">
    <location>
        <position position="221"/>
    </location>
    <ligand>
        <name>Zn(2+)</name>
        <dbReference type="ChEBI" id="CHEBI:29105"/>
    </ligand>
</feature>
<feature type="binding site" evidence="1">
    <location>
        <position position="246"/>
    </location>
    <ligand>
        <name>Zn(2+)</name>
        <dbReference type="ChEBI" id="CHEBI:29105"/>
    </ligand>
</feature>
<feature type="binding site" evidence="1">
    <location>
        <position position="250"/>
    </location>
    <ligand>
        <name>Zn(2+)</name>
        <dbReference type="ChEBI" id="CHEBI:29105"/>
    </ligand>
</feature>
<feature type="binding site" evidence="1">
    <location>
        <position position="281"/>
    </location>
    <ligand>
        <name>ATP</name>
        <dbReference type="ChEBI" id="CHEBI:30616"/>
    </ligand>
</feature>
<evidence type="ECO:0000255" key="1">
    <source>
        <dbReference type="HAMAP-Rule" id="MF_00041"/>
    </source>
</evidence>
<accession>Q821U7</accession>
<keyword id="KW-0030">Aminoacyl-tRNA synthetase</keyword>
<keyword id="KW-0067">ATP-binding</keyword>
<keyword id="KW-0963">Cytoplasm</keyword>
<keyword id="KW-0436">Ligase</keyword>
<keyword id="KW-0479">Metal-binding</keyword>
<keyword id="KW-0547">Nucleotide-binding</keyword>
<keyword id="KW-0648">Protein biosynthesis</keyword>
<keyword id="KW-0862">Zinc</keyword>
<dbReference type="EC" id="6.1.1.16" evidence="1"/>
<dbReference type="EMBL" id="AE015925">
    <property type="protein sequence ID" value="AAP05579.1"/>
    <property type="molecule type" value="Genomic_DNA"/>
</dbReference>
<dbReference type="RefSeq" id="WP_011006793.1">
    <property type="nucleotide sequence ID" value="NC_003361.3"/>
</dbReference>
<dbReference type="SMR" id="Q821U7"/>
<dbReference type="STRING" id="227941.CCA_00838"/>
<dbReference type="KEGG" id="cca:CCA_00838"/>
<dbReference type="eggNOG" id="COG0215">
    <property type="taxonomic scope" value="Bacteria"/>
</dbReference>
<dbReference type="HOGENOM" id="CLU_013528_0_1_0"/>
<dbReference type="OrthoDB" id="9815130at2"/>
<dbReference type="Proteomes" id="UP000002193">
    <property type="component" value="Chromosome"/>
</dbReference>
<dbReference type="GO" id="GO:0005829">
    <property type="term" value="C:cytosol"/>
    <property type="evidence" value="ECO:0007669"/>
    <property type="project" value="TreeGrafter"/>
</dbReference>
<dbReference type="GO" id="GO:0005524">
    <property type="term" value="F:ATP binding"/>
    <property type="evidence" value="ECO:0007669"/>
    <property type="project" value="UniProtKB-UniRule"/>
</dbReference>
<dbReference type="GO" id="GO:0004817">
    <property type="term" value="F:cysteine-tRNA ligase activity"/>
    <property type="evidence" value="ECO:0007669"/>
    <property type="project" value="UniProtKB-UniRule"/>
</dbReference>
<dbReference type="GO" id="GO:0008270">
    <property type="term" value="F:zinc ion binding"/>
    <property type="evidence" value="ECO:0007669"/>
    <property type="project" value="UniProtKB-UniRule"/>
</dbReference>
<dbReference type="GO" id="GO:0006423">
    <property type="term" value="P:cysteinyl-tRNA aminoacylation"/>
    <property type="evidence" value="ECO:0007669"/>
    <property type="project" value="UniProtKB-UniRule"/>
</dbReference>
<dbReference type="CDD" id="cd00672">
    <property type="entry name" value="CysRS_core"/>
    <property type="match status" value="1"/>
</dbReference>
<dbReference type="FunFam" id="3.40.50.620:FF:000130">
    <property type="entry name" value="Cysteine--tRNA ligase"/>
    <property type="match status" value="1"/>
</dbReference>
<dbReference type="Gene3D" id="1.20.120.1910">
    <property type="entry name" value="Cysteine-tRNA ligase, C-terminal anti-codon recognition domain"/>
    <property type="match status" value="1"/>
</dbReference>
<dbReference type="Gene3D" id="3.40.50.620">
    <property type="entry name" value="HUPs"/>
    <property type="match status" value="1"/>
</dbReference>
<dbReference type="HAMAP" id="MF_00041">
    <property type="entry name" value="Cys_tRNA_synth"/>
    <property type="match status" value="1"/>
</dbReference>
<dbReference type="InterPro" id="IPR015803">
    <property type="entry name" value="Cys-tRNA-ligase"/>
</dbReference>
<dbReference type="InterPro" id="IPR015273">
    <property type="entry name" value="Cys-tRNA-synt_Ia_DALR"/>
</dbReference>
<dbReference type="InterPro" id="IPR024909">
    <property type="entry name" value="Cys-tRNA/MSH_ligase"/>
</dbReference>
<dbReference type="InterPro" id="IPR056411">
    <property type="entry name" value="CysS_C"/>
</dbReference>
<dbReference type="InterPro" id="IPR014729">
    <property type="entry name" value="Rossmann-like_a/b/a_fold"/>
</dbReference>
<dbReference type="InterPro" id="IPR032678">
    <property type="entry name" value="tRNA-synt_1_cat_dom"/>
</dbReference>
<dbReference type="InterPro" id="IPR009080">
    <property type="entry name" value="tRNAsynth_Ia_anticodon-bd"/>
</dbReference>
<dbReference type="NCBIfam" id="TIGR00435">
    <property type="entry name" value="cysS"/>
    <property type="match status" value="1"/>
</dbReference>
<dbReference type="PANTHER" id="PTHR10890:SF3">
    <property type="entry name" value="CYSTEINE--TRNA LIGASE, CYTOPLASMIC"/>
    <property type="match status" value="1"/>
</dbReference>
<dbReference type="PANTHER" id="PTHR10890">
    <property type="entry name" value="CYSTEINYL-TRNA SYNTHETASE"/>
    <property type="match status" value="1"/>
</dbReference>
<dbReference type="Pfam" id="PF23493">
    <property type="entry name" value="CysS_C"/>
    <property type="match status" value="1"/>
</dbReference>
<dbReference type="Pfam" id="PF09190">
    <property type="entry name" value="DALR_2"/>
    <property type="match status" value="1"/>
</dbReference>
<dbReference type="Pfam" id="PF01406">
    <property type="entry name" value="tRNA-synt_1e"/>
    <property type="match status" value="1"/>
</dbReference>
<dbReference type="PRINTS" id="PR00983">
    <property type="entry name" value="TRNASYNTHCYS"/>
</dbReference>
<dbReference type="SMART" id="SM00840">
    <property type="entry name" value="DALR_2"/>
    <property type="match status" value="1"/>
</dbReference>
<dbReference type="SUPFAM" id="SSF47323">
    <property type="entry name" value="Anticodon-binding domain of a subclass of class I aminoacyl-tRNA synthetases"/>
    <property type="match status" value="1"/>
</dbReference>
<dbReference type="SUPFAM" id="SSF52374">
    <property type="entry name" value="Nucleotidylyl transferase"/>
    <property type="match status" value="1"/>
</dbReference>
<comment type="catalytic activity">
    <reaction evidence="1">
        <text>tRNA(Cys) + L-cysteine + ATP = L-cysteinyl-tRNA(Cys) + AMP + diphosphate</text>
        <dbReference type="Rhea" id="RHEA:17773"/>
        <dbReference type="Rhea" id="RHEA-COMP:9661"/>
        <dbReference type="Rhea" id="RHEA-COMP:9679"/>
        <dbReference type="ChEBI" id="CHEBI:30616"/>
        <dbReference type="ChEBI" id="CHEBI:33019"/>
        <dbReference type="ChEBI" id="CHEBI:35235"/>
        <dbReference type="ChEBI" id="CHEBI:78442"/>
        <dbReference type="ChEBI" id="CHEBI:78517"/>
        <dbReference type="ChEBI" id="CHEBI:456215"/>
        <dbReference type="EC" id="6.1.1.16"/>
    </reaction>
</comment>
<comment type="cofactor">
    <cofactor evidence="1">
        <name>Zn(2+)</name>
        <dbReference type="ChEBI" id="CHEBI:29105"/>
    </cofactor>
    <text evidence="1">Binds 1 zinc ion per subunit.</text>
</comment>
<comment type="subunit">
    <text evidence="1">Monomer.</text>
</comment>
<comment type="subcellular location">
    <subcellularLocation>
        <location evidence="1">Cytoplasm</location>
    </subcellularLocation>
</comment>
<comment type="similarity">
    <text evidence="1">Belongs to the class-I aminoacyl-tRNA synthetase family.</text>
</comment>
<proteinExistence type="inferred from homology"/>